<gene>
    <name evidence="1" type="primary">psd</name>
    <name type="ordered locus">E2348C_4486</name>
</gene>
<name>PSD_ECO27</name>
<reference key="1">
    <citation type="journal article" date="2009" name="J. Bacteriol.">
        <title>Complete genome sequence and comparative genome analysis of enteropathogenic Escherichia coli O127:H6 strain E2348/69.</title>
        <authorList>
            <person name="Iguchi A."/>
            <person name="Thomson N.R."/>
            <person name="Ogura Y."/>
            <person name="Saunders D."/>
            <person name="Ooka T."/>
            <person name="Henderson I.R."/>
            <person name="Harris D."/>
            <person name="Asadulghani M."/>
            <person name="Kurokawa K."/>
            <person name="Dean P."/>
            <person name="Kenny B."/>
            <person name="Quail M.A."/>
            <person name="Thurston S."/>
            <person name="Dougan G."/>
            <person name="Hayashi T."/>
            <person name="Parkhill J."/>
            <person name="Frankel G."/>
        </authorList>
    </citation>
    <scope>NUCLEOTIDE SEQUENCE [LARGE SCALE GENOMIC DNA]</scope>
    <source>
        <strain>E2348/69 / EPEC</strain>
    </source>
</reference>
<evidence type="ECO:0000255" key="1">
    <source>
        <dbReference type="HAMAP-Rule" id="MF_00662"/>
    </source>
</evidence>
<evidence type="ECO:0000256" key="2">
    <source>
        <dbReference type="SAM" id="MobiDB-lite"/>
    </source>
</evidence>
<keyword id="KW-1003">Cell membrane</keyword>
<keyword id="KW-0210">Decarboxylase</keyword>
<keyword id="KW-0444">Lipid biosynthesis</keyword>
<keyword id="KW-0443">Lipid metabolism</keyword>
<keyword id="KW-0456">Lyase</keyword>
<keyword id="KW-0472">Membrane</keyword>
<keyword id="KW-0594">Phospholipid biosynthesis</keyword>
<keyword id="KW-1208">Phospholipid metabolism</keyword>
<keyword id="KW-0670">Pyruvate</keyword>
<keyword id="KW-1185">Reference proteome</keyword>
<keyword id="KW-0865">Zymogen</keyword>
<feature type="chain" id="PRO_1000147599" description="Phosphatidylserine decarboxylase beta chain" evidence="1">
    <location>
        <begin position="1"/>
        <end position="253"/>
    </location>
</feature>
<feature type="chain" id="PRO_1000147600" description="Phosphatidylserine decarboxylase alpha chain" evidence="1">
    <location>
        <begin position="254"/>
        <end position="322"/>
    </location>
</feature>
<feature type="region of interest" description="Disordered" evidence="2">
    <location>
        <begin position="293"/>
        <end position="322"/>
    </location>
</feature>
<feature type="compositionally biased region" description="Basic and acidic residues" evidence="2">
    <location>
        <begin position="308"/>
        <end position="322"/>
    </location>
</feature>
<feature type="active site" description="Charge relay system; for autoendoproteolytic cleavage activity" evidence="1">
    <location>
        <position position="90"/>
    </location>
</feature>
<feature type="active site" description="Charge relay system; for autoendoproteolytic cleavage activity" evidence="1">
    <location>
        <position position="147"/>
    </location>
</feature>
<feature type="active site" description="Charge relay system; for autoendoproteolytic cleavage activity" evidence="1">
    <location>
        <position position="254"/>
    </location>
</feature>
<feature type="active site" description="Schiff-base intermediate with substrate; via pyruvic acid; for decarboxylase activity" evidence="1">
    <location>
        <position position="254"/>
    </location>
</feature>
<feature type="site" description="Cleavage (non-hydrolytic); by autocatalysis" evidence="1">
    <location>
        <begin position="253"/>
        <end position="254"/>
    </location>
</feature>
<feature type="modified residue" description="Pyruvic acid (Ser); by autocatalysis" evidence="1">
    <location>
        <position position="254"/>
    </location>
</feature>
<comment type="function">
    <text evidence="1">Catalyzes the formation of phosphatidylethanolamine (PtdEtn) from phosphatidylserine (PtdSer).</text>
</comment>
<comment type="catalytic activity">
    <reaction evidence="1">
        <text>a 1,2-diacyl-sn-glycero-3-phospho-L-serine + H(+) = a 1,2-diacyl-sn-glycero-3-phosphoethanolamine + CO2</text>
        <dbReference type="Rhea" id="RHEA:20828"/>
        <dbReference type="ChEBI" id="CHEBI:15378"/>
        <dbReference type="ChEBI" id="CHEBI:16526"/>
        <dbReference type="ChEBI" id="CHEBI:57262"/>
        <dbReference type="ChEBI" id="CHEBI:64612"/>
        <dbReference type="EC" id="4.1.1.65"/>
    </reaction>
</comment>
<comment type="cofactor">
    <cofactor evidence="1">
        <name>pyruvate</name>
        <dbReference type="ChEBI" id="CHEBI:15361"/>
    </cofactor>
    <text evidence="1">Binds 1 pyruvoyl group covalently per subunit.</text>
</comment>
<comment type="pathway">
    <text evidence="1">Phospholipid metabolism; phosphatidylethanolamine biosynthesis; phosphatidylethanolamine from CDP-diacylglycerol: step 2/2.</text>
</comment>
<comment type="subunit">
    <text evidence="1">Heterodimer of a large membrane-associated beta subunit and a small pyruvoyl-containing alpha subunit.</text>
</comment>
<comment type="subcellular location">
    <subcellularLocation>
        <location evidence="1">Cell membrane</location>
        <topology evidence="1">Peripheral membrane protein</topology>
    </subcellularLocation>
</comment>
<comment type="PTM">
    <text evidence="1">Is synthesized initially as an inactive proenzyme. Formation of the active enzyme involves a self-maturation process in which the active site pyruvoyl group is generated from an internal serine residue via an autocatalytic post-translational modification. Two non-identical subunits are generated from the proenzyme in this reaction, and the pyruvate is formed at the N-terminus of the alpha chain, which is derived from the carboxyl end of the proenzyme. The autoendoproteolytic cleavage occurs by a canonical serine protease mechanism, in which the side chain hydroxyl group of the serine supplies its oxygen atom to form the C-terminus of the beta chain, while the remainder of the serine residue undergoes an oxidative deamination to produce ammonia and the pyruvoyl prosthetic group on the alpha chain. During this reaction, the Ser that is part of the protease active site of the proenzyme becomes the pyruvoyl prosthetic group, which constitutes an essential element of the active site of the mature decarboxylase.</text>
</comment>
<comment type="similarity">
    <text evidence="1">Belongs to the phosphatidylserine decarboxylase family. PSD-B subfamily. Prokaryotic type I sub-subfamily.</text>
</comment>
<organism>
    <name type="scientific">Escherichia coli O127:H6 (strain E2348/69 / EPEC)</name>
    <dbReference type="NCBI Taxonomy" id="574521"/>
    <lineage>
        <taxon>Bacteria</taxon>
        <taxon>Pseudomonadati</taxon>
        <taxon>Pseudomonadota</taxon>
        <taxon>Gammaproteobacteria</taxon>
        <taxon>Enterobacterales</taxon>
        <taxon>Enterobacteriaceae</taxon>
        <taxon>Escherichia</taxon>
    </lineage>
</organism>
<proteinExistence type="inferred from homology"/>
<protein>
    <recommendedName>
        <fullName evidence="1">Phosphatidylserine decarboxylase proenzyme</fullName>
        <ecNumber evidence="1">4.1.1.65</ecNumber>
    </recommendedName>
    <component>
        <recommendedName>
            <fullName evidence="1">Phosphatidylserine decarboxylase alpha chain</fullName>
        </recommendedName>
    </component>
    <component>
        <recommendedName>
            <fullName evidence="1">Phosphatidylserine decarboxylase beta chain</fullName>
        </recommendedName>
    </component>
</protein>
<sequence>MLNSFKLSLQYILPKLWLTRLAGWGASKRAGWLTKLVIDLFVKYYKVDMKEAQKPDTASYRTFNEFFVRPLRDEVRPIDTDPNVLVMPADGVISQLGKIEEDKILQAKGHNYSLEALLAGNYLMADLFRNGTFVTTYLSPRDYHRVHMPCNGILREMIYVPGDLFSVNHLTAQNVPNLFARNERVICLFDTEFGPMAQILVGATIVGSIETVWAGTITPPREGIIKRWTWPAGENDGSVALLKGQEMGRFKLGSTVINLFAPGKVDLVEQLESLSVTKIGQPLAVSTETFVTPDAEPAPLPAEEIEAEHDASPLIDDKKDQV</sequence>
<accession>B7UPY0</accession>
<dbReference type="EC" id="4.1.1.65" evidence="1"/>
<dbReference type="EMBL" id="FM180568">
    <property type="protein sequence ID" value="CAS12034.1"/>
    <property type="molecule type" value="Genomic_DNA"/>
</dbReference>
<dbReference type="SMR" id="B7UPY0"/>
<dbReference type="KEGG" id="ecg:E2348C_4486"/>
<dbReference type="HOGENOM" id="CLU_029061_4_1_6"/>
<dbReference type="UniPathway" id="UPA00558">
    <property type="reaction ID" value="UER00616"/>
</dbReference>
<dbReference type="Proteomes" id="UP000008205">
    <property type="component" value="Chromosome"/>
</dbReference>
<dbReference type="GO" id="GO:0005886">
    <property type="term" value="C:plasma membrane"/>
    <property type="evidence" value="ECO:0007669"/>
    <property type="project" value="UniProtKB-SubCell"/>
</dbReference>
<dbReference type="GO" id="GO:0004609">
    <property type="term" value="F:phosphatidylserine decarboxylase activity"/>
    <property type="evidence" value="ECO:0007669"/>
    <property type="project" value="UniProtKB-UniRule"/>
</dbReference>
<dbReference type="GO" id="GO:0006646">
    <property type="term" value="P:phosphatidylethanolamine biosynthetic process"/>
    <property type="evidence" value="ECO:0007669"/>
    <property type="project" value="UniProtKB-UniRule"/>
</dbReference>
<dbReference type="HAMAP" id="MF_00662">
    <property type="entry name" value="PS_decarb_PSD_B_type1"/>
    <property type="match status" value="1"/>
</dbReference>
<dbReference type="InterPro" id="IPR003817">
    <property type="entry name" value="PS_Dcarbxylase"/>
</dbReference>
<dbReference type="InterPro" id="IPR033177">
    <property type="entry name" value="PSD-B"/>
</dbReference>
<dbReference type="InterPro" id="IPR033178">
    <property type="entry name" value="PSD_type1_pro"/>
</dbReference>
<dbReference type="NCBIfam" id="TIGR00163">
    <property type="entry name" value="PS_decarb"/>
    <property type="match status" value="1"/>
</dbReference>
<dbReference type="PANTHER" id="PTHR10067">
    <property type="entry name" value="PHOSPHATIDYLSERINE DECARBOXYLASE"/>
    <property type="match status" value="1"/>
</dbReference>
<dbReference type="PANTHER" id="PTHR10067:SF6">
    <property type="entry name" value="PHOSPHATIDYLSERINE DECARBOXYLASE PROENZYME, MITOCHONDRIAL"/>
    <property type="match status" value="1"/>
</dbReference>
<dbReference type="Pfam" id="PF02666">
    <property type="entry name" value="PS_Dcarbxylase"/>
    <property type="match status" value="1"/>
</dbReference>